<accession>Q8N8J0</accession>
<gene>
    <name type="primary">PI4KAP1</name>
</gene>
<evidence type="ECO:0000250" key="1"/>
<evidence type="ECO:0000305" key="2"/>
<organism>
    <name type="scientific">Homo sapiens</name>
    <name type="common">Human</name>
    <dbReference type="NCBI Taxonomy" id="9606"/>
    <lineage>
        <taxon>Eukaryota</taxon>
        <taxon>Metazoa</taxon>
        <taxon>Chordata</taxon>
        <taxon>Craniata</taxon>
        <taxon>Vertebrata</taxon>
        <taxon>Euteleostomi</taxon>
        <taxon>Mammalia</taxon>
        <taxon>Eutheria</taxon>
        <taxon>Euarchontoglires</taxon>
        <taxon>Primates</taxon>
        <taxon>Haplorrhini</taxon>
        <taxon>Catarrhini</taxon>
        <taxon>Hominidae</taxon>
        <taxon>Homo</taxon>
    </lineage>
</organism>
<dbReference type="EMBL" id="AK096724">
    <property type="protein sequence ID" value="BAC04851.1"/>
    <property type="molecule type" value="mRNA"/>
</dbReference>
<dbReference type="EMBL" id="AK292695">
    <property type="protein sequence ID" value="BAF85384.1"/>
    <property type="molecule type" value="mRNA"/>
</dbReference>
<dbReference type="EMBL" id="BC072398">
    <property type="status" value="NOT_ANNOTATED_CDS"/>
    <property type="molecule type" value="mRNA"/>
</dbReference>
<dbReference type="SMR" id="Q8N8J0"/>
<dbReference type="FunCoup" id="Q8N8J0">
    <property type="interactions" value="30"/>
</dbReference>
<dbReference type="IntAct" id="Q8N8J0">
    <property type="interactions" value="34"/>
</dbReference>
<dbReference type="BioMuta" id="HGNC:33576"/>
<dbReference type="jPOST" id="Q8N8J0"/>
<dbReference type="MassIVE" id="Q8N8J0"/>
<dbReference type="PeptideAtlas" id="Q8N8J0"/>
<dbReference type="AGR" id="HGNC:33576"/>
<dbReference type="GeneCards" id="PI4KAP1"/>
<dbReference type="HGNC" id="HGNC:33576">
    <property type="gene designation" value="PI4KAP1"/>
</dbReference>
<dbReference type="neXtProt" id="NX_Q8N8J0"/>
<dbReference type="InParanoid" id="Q8N8J0"/>
<dbReference type="PAN-GO" id="Q8N8J0">
    <property type="GO annotations" value="5 GO annotations based on evolutionary models"/>
</dbReference>
<dbReference type="PhylomeDB" id="Q8N8J0"/>
<dbReference type="PathwayCommons" id="Q8N8J0"/>
<dbReference type="ChiTaRS" id="PI4KAP1">
    <property type="organism name" value="human"/>
</dbReference>
<dbReference type="Pharos" id="Q8N8J0">
    <property type="development level" value="Tdark"/>
</dbReference>
<dbReference type="Proteomes" id="UP000005640">
    <property type="component" value="Unplaced"/>
</dbReference>
<dbReference type="RNAct" id="Q8N8J0">
    <property type="molecule type" value="protein"/>
</dbReference>
<dbReference type="Gene3D" id="3.30.1010.10">
    <property type="entry name" value="Phosphatidylinositol 3-kinase Catalytic Subunit, Chain A, domain 4"/>
    <property type="match status" value="1"/>
</dbReference>
<dbReference type="InterPro" id="IPR045495">
    <property type="entry name" value="PI4K_N"/>
</dbReference>
<dbReference type="Pfam" id="PF19274">
    <property type="entry name" value="PI4K_N"/>
    <property type="match status" value="1"/>
</dbReference>
<keyword id="KW-1185">Reference proteome</keyword>
<feature type="chain" id="PRO_0000341374" description="Putative inactive phosphatidylinositol 4-kinase alpha-like protein P1">
    <location>
        <begin position="1"/>
        <end position="262"/>
    </location>
</feature>
<feature type="region of interest" description="Pleckstrin homology (PH) domain conferring phosphoinositide binding specificity" evidence="1">
    <location>
        <begin position="180"/>
        <end position="262"/>
    </location>
</feature>
<proteinExistence type="uncertain"/>
<protein>
    <recommendedName>
        <fullName>Putative inactive phosphatidylinositol 4-kinase alpha-like protein P1</fullName>
    </recommendedName>
</protein>
<sequence length="262" mass="29179">MTVEQKFGLFSAEIKEADPLAASEASQPKPCPPEVTPHYIWIDFLVQRFEIAKYCSSDQVEIFSSLLQRSMSLNIGGAKGSMNRHVAAIGPRFKLLTLGLSLLHADVVPNATIRNVLREKIYSTAFDYFSCPPKFPTQGEKRLREDISIMIKFWTAMFSDKKYLTASQLVPPADIGDLREQLVEENTGSLSGPAKDFYQREFDFFNKITNVSAVIKPYPKGDQRKKACLSALSEVTVQPGCSLPSNPEAIVLDVDYKSGTPM</sequence>
<comment type="similarity">
    <text evidence="2">Belongs to the PI3/PI4-kinase family. Type III PI4K subfamily.</text>
</comment>
<comment type="caution">
    <text evidence="2">Could be the product of a pseudogene. Much shorter than other members of the family and lacks the PI3K/PI4K catalytic domain.</text>
</comment>
<reference key="1">
    <citation type="journal article" date="2004" name="Nat. Genet.">
        <title>Complete sequencing and characterization of 21,243 full-length human cDNAs.</title>
        <authorList>
            <person name="Ota T."/>
            <person name="Suzuki Y."/>
            <person name="Nishikawa T."/>
            <person name="Otsuki T."/>
            <person name="Sugiyama T."/>
            <person name="Irie R."/>
            <person name="Wakamatsu A."/>
            <person name="Hayashi K."/>
            <person name="Sato H."/>
            <person name="Nagai K."/>
            <person name="Kimura K."/>
            <person name="Makita H."/>
            <person name="Sekine M."/>
            <person name="Obayashi M."/>
            <person name="Nishi T."/>
            <person name="Shibahara T."/>
            <person name="Tanaka T."/>
            <person name="Ishii S."/>
            <person name="Yamamoto J."/>
            <person name="Saito K."/>
            <person name="Kawai Y."/>
            <person name="Isono Y."/>
            <person name="Nakamura Y."/>
            <person name="Nagahari K."/>
            <person name="Murakami K."/>
            <person name="Yasuda T."/>
            <person name="Iwayanagi T."/>
            <person name="Wagatsuma M."/>
            <person name="Shiratori A."/>
            <person name="Sudo H."/>
            <person name="Hosoiri T."/>
            <person name="Kaku Y."/>
            <person name="Kodaira H."/>
            <person name="Kondo H."/>
            <person name="Sugawara M."/>
            <person name="Takahashi M."/>
            <person name="Kanda K."/>
            <person name="Yokoi T."/>
            <person name="Furuya T."/>
            <person name="Kikkawa E."/>
            <person name="Omura Y."/>
            <person name="Abe K."/>
            <person name="Kamihara K."/>
            <person name="Katsuta N."/>
            <person name="Sato K."/>
            <person name="Tanikawa M."/>
            <person name="Yamazaki M."/>
            <person name="Ninomiya K."/>
            <person name="Ishibashi T."/>
            <person name="Yamashita H."/>
            <person name="Murakawa K."/>
            <person name="Fujimori K."/>
            <person name="Tanai H."/>
            <person name="Kimata M."/>
            <person name="Watanabe M."/>
            <person name="Hiraoka S."/>
            <person name="Chiba Y."/>
            <person name="Ishida S."/>
            <person name="Ono Y."/>
            <person name="Takiguchi S."/>
            <person name="Watanabe S."/>
            <person name="Yosida M."/>
            <person name="Hotuta T."/>
            <person name="Kusano J."/>
            <person name="Kanehori K."/>
            <person name="Takahashi-Fujii A."/>
            <person name="Hara H."/>
            <person name="Tanase T.-O."/>
            <person name="Nomura Y."/>
            <person name="Togiya S."/>
            <person name="Komai F."/>
            <person name="Hara R."/>
            <person name="Takeuchi K."/>
            <person name="Arita M."/>
            <person name="Imose N."/>
            <person name="Musashino K."/>
            <person name="Yuuki H."/>
            <person name="Oshima A."/>
            <person name="Sasaki N."/>
            <person name="Aotsuka S."/>
            <person name="Yoshikawa Y."/>
            <person name="Matsunawa H."/>
            <person name="Ichihara T."/>
            <person name="Shiohata N."/>
            <person name="Sano S."/>
            <person name="Moriya S."/>
            <person name="Momiyama H."/>
            <person name="Satoh N."/>
            <person name="Takami S."/>
            <person name="Terashima Y."/>
            <person name="Suzuki O."/>
            <person name="Nakagawa S."/>
            <person name="Senoh A."/>
            <person name="Mizoguchi H."/>
            <person name="Goto Y."/>
            <person name="Shimizu F."/>
            <person name="Wakebe H."/>
            <person name="Hishigaki H."/>
            <person name="Watanabe T."/>
            <person name="Sugiyama A."/>
            <person name="Takemoto M."/>
            <person name="Kawakami B."/>
            <person name="Yamazaki M."/>
            <person name="Watanabe K."/>
            <person name="Kumagai A."/>
            <person name="Itakura S."/>
            <person name="Fukuzumi Y."/>
            <person name="Fujimori Y."/>
            <person name="Komiyama M."/>
            <person name="Tashiro H."/>
            <person name="Tanigami A."/>
            <person name="Fujiwara T."/>
            <person name="Ono T."/>
            <person name="Yamada K."/>
            <person name="Fujii Y."/>
            <person name="Ozaki K."/>
            <person name="Hirao M."/>
            <person name="Ohmori Y."/>
            <person name="Kawabata A."/>
            <person name="Hikiji T."/>
            <person name="Kobatake N."/>
            <person name="Inagaki H."/>
            <person name="Ikema Y."/>
            <person name="Okamoto S."/>
            <person name="Okitani R."/>
            <person name="Kawakami T."/>
            <person name="Noguchi S."/>
            <person name="Itoh T."/>
            <person name="Shigeta K."/>
            <person name="Senba T."/>
            <person name="Matsumura K."/>
            <person name="Nakajima Y."/>
            <person name="Mizuno T."/>
            <person name="Morinaga M."/>
            <person name="Sasaki M."/>
            <person name="Togashi T."/>
            <person name="Oyama M."/>
            <person name="Hata H."/>
            <person name="Watanabe M."/>
            <person name="Komatsu T."/>
            <person name="Mizushima-Sugano J."/>
            <person name="Satoh T."/>
            <person name="Shirai Y."/>
            <person name="Takahashi Y."/>
            <person name="Nakagawa K."/>
            <person name="Okumura K."/>
            <person name="Nagase T."/>
            <person name="Nomura N."/>
            <person name="Kikuchi H."/>
            <person name="Masuho Y."/>
            <person name="Yamashita R."/>
            <person name="Nakai K."/>
            <person name="Yada T."/>
            <person name="Nakamura Y."/>
            <person name="Ohara O."/>
            <person name="Isogai T."/>
            <person name="Sugano S."/>
        </authorList>
    </citation>
    <scope>NUCLEOTIDE SEQUENCE [LARGE SCALE MRNA]</scope>
    <source>
        <tissue>Placenta</tissue>
        <tissue>Thymus</tissue>
    </source>
</reference>
<reference key="2">
    <citation type="journal article" date="2004" name="Genome Res.">
        <title>The status, quality, and expansion of the NIH full-length cDNA project: the Mammalian Gene Collection (MGC).</title>
        <authorList>
            <consortium name="The MGC Project Team"/>
        </authorList>
    </citation>
    <scope>NUCLEOTIDE SEQUENCE [LARGE SCALE MRNA]</scope>
    <source>
        <tissue>Brain</tissue>
    </source>
</reference>
<name>PI4P1_HUMAN</name>